<sequence length="809" mass="92674">MFSLLNMYRKVLELPLSFLVKNNPIPHHPIEELKLDPTQPMVYVLPYTSQTDLVIFRKNCLSVGLPDPLEKNEIEGKSLPRFVFLDEGRRFFKSKGAKEETIQVFNQYLELHHQRSDLDVQIIPVSVLWGRSPGHEKQSGLPQLRLLSGLQKFIAAVWFGRDTFVRFSQAVSLRYMVNEHGSDQAISHKLARVAKIHFSKQRISATGPRLPNREAMFNKLLASPTILDAIQDEAKAKNISEEKATQEAKKILDEIAANVNYEGLRVADRFLRWLWNKLYQGIDVQNADRVRKLALDGHEIVYVPCHRSHIDYLLLSYVLYHQGLVPPHIAAGINLNFWPVGGMFRRGGAFFIRRTFKGNRLYSTIFREYLAELFHRGYSVEYFIEGGRSRTGRLLAPKTGMMSMTLQALLQGQTRPISVVPVYVGYEHVLEVDTYAKELRGAAKEKENAGLVLRVIKKLRNLGKGYVNFGEPITLSNYLNQHYPEWKENTQAEERAKWFNQAVDSISHQVMVNINKAAAVNAMNLTGTALLSSRQRALSREQLLEQLESYQQFLQNVPYSQDIVVPTESPEKMLEHILQLERVGIIVEKDNFGEIVRLERNSAVLMTYYRNNIQHLFVLPSLVASIVLHYEAIQKPLVLEAVSKIYPFLKSELFLSFSYEELQDRVNHIITEFERQEVIKCNANMLSINKPRVRMLQLWSSGVREILQRYYITVSILEKDPATPRASLEKDSQSVAQRLSVLHGINAPEFFDKAVFSAFIASLKQEGYFNEEGIANTEKLNEITEILNQVISTEVCLTIKGAIAKIEEE</sequence>
<evidence type="ECO:0000250" key="1"/>
<evidence type="ECO:0000305" key="2"/>
<protein>
    <recommendedName>
        <fullName>Glycerol-3-phosphate acyltransferase</fullName>
        <shortName>GPAT</shortName>
        <ecNumber>2.3.1.15</ecNumber>
    </recommendedName>
</protein>
<dbReference type="EC" id="2.3.1.15"/>
<dbReference type="EMBL" id="AE004439">
    <property type="protein sequence ID" value="AAK03266.1"/>
    <property type="molecule type" value="Genomic_DNA"/>
</dbReference>
<dbReference type="RefSeq" id="WP_005751873.1">
    <property type="nucleotide sequence ID" value="NC_002663.1"/>
</dbReference>
<dbReference type="SMR" id="Q9CLN7"/>
<dbReference type="STRING" id="272843.PM1182"/>
<dbReference type="EnsemblBacteria" id="AAK03266">
    <property type="protein sequence ID" value="AAK03266"/>
    <property type="gene ID" value="PM1182"/>
</dbReference>
<dbReference type="KEGG" id="pmu:PM1182"/>
<dbReference type="PATRIC" id="fig|272843.6.peg.1193"/>
<dbReference type="HOGENOM" id="CLU_015407_0_0_6"/>
<dbReference type="OrthoDB" id="335193at2"/>
<dbReference type="UniPathway" id="UPA00557">
    <property type="reaction ID" value="UER00612"/>
</dbReference>
<dbReference type="Proteomes" id="UP000000809">
    <property type="component" value="Chromosome"/>
</dbReference>
<dbReference type="GO" id="GO:0005886">
    <property type="term" value="C:plasma membrane"/>
    <property type="evidence" value="ECO:0007669"/>
    <property type="project" value="UniProtKB-SubCell"/>
</dbReference>
<dbReference type="GO" id="GO:0004366">
    <property type="term" value="F:glycerol-3-phosphate O-acyltransferase activity"/>
    <property type="evidence" value="ECO:0007669"/>
    <property type="project" value="UniProtKB-UniRule"/>
</dbReference>
<dbReference type="GO" id="GO:0016024">
    <property type="term" value="P:CDP-diacylglycerol biosynthetic process"/>
    <property type="evidence" value="ECO:0007669"/>
    <property type="project" value="UniProtKB-UniRule"/>
</dbReference>
<dbReference type="GO" id="GO:0006631">
    <property type="term" value="P:fatty acid metabolic process"/>
    <property type="evidence" value="ECO:0007669"/>
    <property type="project" value="TreeGrafter"/>
</dbReference>
<dbReference type="CDD" id="cd07993">
    <property type="entry name" value="LPLAT_DHAPAT-like"/>
    <property type="match status" value="1"/>
</dbReference>
<dbReference type="HAMAP" id="MF_00393">
    <property type="entry name" value="Glyc3P_acyltrans"/>
    <property type="match status" value="1"/>
</dbReference>
<dbReference type="InterPro" id="IPR022284">
    <property type="entry name" value="GPAT/DHAPAT"/>
</dbReference>
<dbReference type="InterPro" id="IPR045520">
    <property type="entry name" value="GPAT/DHAPAT_C"/>
</dbReference>
<dbReference type="InterPro" id="IPR041728">
    <property type="entry name" value="GPAT/DHAPAT_LPLAT"/>
</dbReference>
<dbReference type="InterPro" id="IPR028354">
    <property type="entry name" value="GPAT_PlsB"/>
</dbReference>
<dbReference type="InterPro" id="IPR002123">
    <property type="entry name" value="Plipid/glycerol_acylTrfase"/>
</dbReference>
<dbReference type="NCBIfam" id="TIGR03703">
    <property type="entry name" value="plsB"/>
    <property type="match status" value="1"/>
</dbReference>
<dbReference type="NCBIfam" id="NF003441">
    <property type="entry name" value="PRK04974.1"/>
    <property type="match status" value="1"/>
</dbReference>
<dbReference type="PANTHER" id="PTHR12563:SF17">
    <property type="entry name" value="DIHYDROXYACETONE PHOSPHATE ACYLTRANSFERASE"/>
    <property type="match status" value="1"/>
</dbReference>
<dbReference type="PANTHER" id="PTHR12563">
    <property type="entry name" value="GLYCEROL-3-PHOSPHATE ACYLTRANSFERASE"/>
    <property type="match status" value="1"/>
</dbReference>
<dbReference type="Pfam" id="PF01553">
    <property type="entry name" value="Acyltransferase"/>
    <property type="match status" value="1"/>
</dbReference>
<dbReference type="Pfam" id="PF19277">
    <property type="entry name" value="GPAT_C"/>
    <property type="match status" value="1"/>
</dbReference>
<dbReference type="PIRSF" id="PIRSF500064">
    <property type="entry name" value="GPAT"/>
    <property type="match status" value="1"/>
</dbReference>
<dbReference type="PIRSF" id="PIRSF000437">
    <property type="entry name" value="GPAT_DHAPAT"/>
    <property type="match status" value="1"/>
</dbReference>
<dbReference type="SMART" id="SM00563">
    <property type="entry name" value="PlsC"/>
    <property type="match status" value="1"/>
</dbReference>
<dbReference type="SUPFAM" id="SSF69593">
    <property type="entry name" value="Glycerol-3-phosphate (1)-acyltransferase"/>
    <property type="match status" value="1"/>
</dbReference>
<keyword id="KW-0012">Acyltransferase</keyword>
<keyword id="KW-0997">Cell inner membrane</keyword>
<keyword id="KW-1003">Cell membrane</keyword>
<keyword id="KW-0444">Lipid biosynthesis</keyword>
<keyword id="KW-0443">Lipid metabolism</keyword>
<keyword id="KW-0472">Membrane</keyword>
<keyword id="KW-0594">Phospholipid biosynthesis</keyword>
<keyword id="KW-1208">Phospholipid metabolism</keyword>
<keyword id="KW-1185">Reference proteome</keyword>
<keyword id="KW-0808">Transferase</keyword>
<reference key="1">
    <citation type="journal article" date="2001" name="Proc. Natl. Acad. Sci. U.S.A.">
        <title>Complete genomic sequence of Pasteurella multocida Pm70.</title>
        <authorList>
            <person name="May B.J."/>
            <person name="Zhang Q."/>
            <person name="Li L.L."/>
            <person name="Paustian M.L."/>
            <person name="Whittam T.S."/>
            <person name="Kapur V."/>
        </authorList>
    </citation>
    <scope>NUCLEOTIDE SEQUENCE [LARGE SCALE GENOMIC DNA]</scope>
    <source>
        <strain>Pm70</strain>
    </source>
</reference>
<comment type="catalytic activity">
    <reaction>
        <text>sn-glycerol 3-phosphate + an acyl-CoA = a 1-acyl-sn-glycero-3-phosphate + CoA</text>
        <dbReference type="Rhea" id="RHEA:15325"/>
        <dbReference type="ChEBI" id="CHEBI:57287"/>
        <dbReference type="ChEBI" id="CHEBI:57597"/>
        <dbReference type="ChEBI" id="CHEBI:57970"/>
        <dbReference type="ChEBI" id="CHEBI:58342"/>
        <dbReference type="EC" id="2.3.1.15"/>
    </reaction>
</comment>
<comment type="pathway">
    <text>Phospholipid metabolism; CDP-diacylglycerol biosynthesis; CDP-diacylglycerol from sn-glycerol 3-phosphate: step 1/3.</text>
</comment>
<comment type="subcellular location">
    <subcellularLocation>
        <location evidence="1">Cell inner membrane</location>
        <topology evidence="1">Peripheral membrane protein</topology>
        <orientation evidence="1">Cytoplasmic side</orientation>
    </subcellularLocation>
</comment>
<comment type="domain">
    <text evidence="1">The HXXXXD motif is essential for acyltransferase activity and may constitute the binding site for the phosphate moiety of the glycerol-3-phosphate.</text>
</comment>
<comment type="similarity">
    <text evidence="2">Belongs to the GPAT/DAPAT family.</text>
</comment>
<proteinExistence type="inferred from homology"/>
<feature type="chain" id="PRO_0000195226" description="Glycerol-3-phosphate acyltransferase">
    <location>
        <begin position="1"/>
        <end position="809"/>
    </location>
</feature>
<feature type="short sequence motif" description="HXXXXD motif">
    <location>
        <begin position="306"/>
        <end position="311"/>
    </location>
</feature>
<gene>
    <name type="primary">plsB</name>
    <name type="ordered locus">PM1182</name>
</gene>
<organism>
    <name type="scientific">Pasteurella multocida (strain Pm70)</name>
    <dbReference type="NCBI Taxonomy" id="272843"/>
    <lineage>
        <taxon>Bacteria</taxon>
        <taxon>Pseudomonadati</taxon>
        <taxon>Pseudomonadota</taxon>
        <taxon>Gammaproteobacteria</taxon>
        <taxon>Pasteurellales</taxon>
        <taxon>Pasteurellaceae</taxon>
        <taxon>Pasteurella</taxon>
    </lineage>
</organism>
<accession>Q9CLN7</accession>
<name>PLSB_PASMU</name>